<reference key="1">
    <citation type="journal article" date="2008" name="J. Bacteriol.">
        <title>The complete genome sequence of Escherichia coli DH10B: insights into the biology of a laboratory workhorse.</title>
        <authorList>
            <person name="Durfee T."/>
            <person name="Nelson R."/>
            <person name="Baldwin S."/>
            <person name="Plunkett G. III"/>
            <person name="Burland V."/>
            <person name="Mau B."/>
            <person name="Petrosino J.F."/>
            <person name="Qin X."/>
            <person name="Muzny D.M."/>
            <person name="Ayele M."/>
            <person name="Gibbs R.A."/>
            <person name="Csorgo B."/>
            <person name="Posfai G."/>
            <person name="Weinstock G.M."/>
            <person name="Blattner F.R."/>
        </authorList>
    </citation>
    <scope>NUCLEOTIDE SEQUENCE [LARGE SCALE GENOMIC DNA]</scope>
    <source>
        <strain>K12 / DH10B</strain>
    </source>
</reference>
<feature type="chain" id="PRO_1000195628" description="Large ribosomal subunit protein uL11">
    <location>
        <begin position="1"/>
        <end position="142"/>
    </location>
</feature>
<sequence length="142" mass="14875">MAKKVQAYVKLQVAAGMANPSPPVGPALGQQGVNIMEFCKAFNAKTDSIEKGLPIPVVITVYADRSFTFVTKTPPAAVLLKKAAGIKSGSGKPNKDKVGKISRAQLQEIAQTKAADMTGADIEAMTRSIEGTARSMGLVVED</sequence>
<keyword id="KW-0488">Methylation</keyword>
<keyword id="KW-0687">Ribonucleoprotein</keyword>
<keyword id="KW-0689">Ribosomal protein</keyword>
<keyword id="KW-0694">RNA-binding</keyword>
<keyword id="KW-0699">rRNA-binding</keyword>
<proteinExistence type="inferred from homology"/>
<name>RL11_ECODH</name>
<gene>
    <name evidence="1" type="primary">rplK</name>
    <name type="ordered locus">ECDH10B_4171</name>
</gene>
<organism>
    <name type="scientific">Escherichia coli (strain K12 / DH10B)</name>
    <dbReference type="NCBI Taxonomy" id="316385"/>
    <lineage>
        <taxon>Bacteria</taxon>
        <taxon>Pseudomonadati</taxon>
        <taxon>Pseudomonadota</taxon>
        <taxon>Gammaproteobacteria</taxon>
        <taxon>Enterobacterales</taxon>
        <taxon>Enterobacteriaceae</taxon>
        <taxon>Escherichia</taxon>
    </lineage>
</organism>
<protein>
    <recommendedName>
        <fullName evidence="1">Large ribosomal subunit protein uL11</fullName>
    </recommendedName>
    <alternativeName>
        <fullName evidence="2">50S ribosomal protein L11</fullName>
    </alternativeName>
</protein>
<dbReference type="EMBL" id="CP000948">
    <property type="protein sequence ID" value="ACB04985.1"/>
    <property type="molecule type" value="Genomic_DNA"/>
</dbReference>
<dbReference type="RefSeq" id="WP_001085926.1">
    <property type="nucleotide sequence ID" value="NC_010473.1"/>
</dbReference>
<dbReference type="SMR" id="B1XBY5"/>
<dbReference type="GeneID" id="93777911"/>
<dbReference type="KEGG" id="ecd:ECDH10B_4171"/>
<dbReference type="HOGENOM" id="CLU_074237_2_0_6"/>
<dbReference type="GO" id="GO:0022625">
    <property type="term" value="C:cytosolic large ribosomal subunit"/>
    <property type="evidence" value="ECO:0007669"/>
    <property type="project" value="TreeGrafter"/>
</dbReference>
<dbReference type="GO" id="GO:0070180">
    <property type="term" value="F:large ribosomal subunit rRNA binding"/>
    <property type="evidence" value="ECO:0007669"/>
    <property type="project" value="UniProtKB-UniRule"/>
</dbReference>
<dbReference type="GO" id="GO:0003735">
    <property type="term" value="F:structural constituent of ribosome"/>
    <property type="evidence" value="ECO:0007669"/>
    <property type="project" value="InterPro"/>
</dbReference>
<dbReference type="GO" id="GO:0006412">
    <property type="term" value="P:translation"/>
    <property type="evidence" value="ECO:0007669"/>
    <property type="project" value="UniProtKB-UniRule"/>
</dbReference>
<dbReference type="CDD" id="cd00349">
    <property type="entry name" value="Ribosomal_L11"/>
    <property type="match status" value="1"/>
</dbReference>
<dbReference type="FunFam" id="1.10.10.250:FF:000001">
    <property type="entry name" value="50S ribosomal protein L11"/>
    <property type="match status" value="1"/>
</dbReference>
<dbReference type="FunFam" id="3.30.1550.10:FF:000001">
    <property type="entry name" value="50S ribosomal protein L11"/>
    <property type="match status" value="1"/>
</dbReference>
<dbReference type="Gene3D" id="1.10.10.250">
    <property type="entry name" value="Ribosomal protein L11, C-terminal domain"/>
    <property type="match status" value="1"/>
</dbReference>
<dbReference type="Gene3D" id="3.30.1550.10">
    <property type="entry name" value="Ribosomal protein L11/L12, N-terminal domain"/>
    <property type="match status" value="1"/>
</dbReference>
<dbReference type="HAMAP" id="MF_00736">
    <property type="entry name" value="Ribosomal_uL11"/>
    <property type="match status" value="1"/>
</dbReference>
<dbReference type="InterPro" id="IPR000911">
    <property type="entry name" value="Ribosomal_uL11"/>
</dbReference>
<dbReference type="InterPro" id="IPR006519">
    <property type="entry name" value="Ribosomal_uL11_bac-typ"/>
</dbReference>
<dbReference type="InterPro" id="IPR020783">
    <property type="entry name" value="Ribosomal_uL11_C"/>
</dbReference>
<dbReference type="InterPro" id="IPR036769">
    <property type="entry name" value="Ribosomal_uL11_C_sf"/>
</dbReference>
<dbReference type="InterPro" id="IPR020785">
    <property type="entry name" value="Ribosomal_uL11_CS"/>
</dbReference>
<dbReference type="InterPro" id="IPR020784">
    <property type="entry name" value="Ribosomal_uL11_N"/>
</dbReference>
<dbReference type="InterPro" id="IPR036796">
    <property type="entry name" value="Ribosomal_uL11_N_sf"/>
</dbReference>
<dbReference type="NCBIfam" id="TIGR01632">
    <property type="entry name" value="L11_bact"/>
    <property type="match status" value="1"/>
</dbReference>
<dbReference type="PANTHER" id="PTHR11661">
    <property type="entry name" value="60S RIBOSOMAL PROTEIN L12"/>
    <property type="match status" value="1"/>
</dbReference>
<dbReference type="PANTHER" id="PTHR11661:SF1">
    <property type="entry name" value="LARGE RIBOSOMAL SUBUNIT PROTEIN UL11M"/>
    <property type="match status" value="1"/>
</dbReference>
<dbReference type="Pfam" id="PF00298">
    <property type="entry name" value="Ribosomal_L11"/>
    <property type="match status" value="1"/>
</dbReference>
<dbReference type="Pfam" id="PF03946">
    <property type="entry name" value="Ribosomal_L11_N"/>
    <property type="match status" value="1"/>
</dbReference>
<dbReference type="SMART" id="SM00649">
    <property type="entry name" value="RL11"/>
    <property type="match status" value="1"/>
</dbReference>
<dbReference type="SUPFAM" id="SSF54747">
    <property type="entry name" value="Ribosomal L11/L12e N-terminal domain"/>
    <property type="match status" value="1"/>
</dbReference>
<dbReference type="SUPFAM" id="SSF46906">
    <property type="entry name" value="Ribosomal protein L11, C-terminal domain"/>
    <property type="match status" value="1"/>
</dbReference>
<dbReference type="PROSITE" id="PS00359">
    <property type="entry name" value="RIBOSOMAL_L11"/>
    <property type="match status" value="1"/>
</dbReference>
<comment type="function">
    <text evidence="1">Forms part of the ribosomal stalk which helps the ribosome interact with GTP-bound translation factors.</text>
</comment>
<comment type="subunit">
    <text evidence="1">Part of the ribosomal stalk of the 50S ribosomal subunit. Interacts with L10 and the large rRNA to form the base of the stalk. L10 forms an elongated spine to which L12 dimers bind in a sequential fashion forming a multimeric L10(L12)X complex.</text>
</comment>
<comment type="PTM">
    <text evidence="1">One or more lysine residues are methylated.</text>
</comment>
<comment type="similarity">
    <text evidence="1">Belongs to the universal ribosomal protein uL11 family.</text>
</comment>
<accession>B1XBY5</accession>
<evidence type="ECO:0000255" key="1">
    <source>
        <dbReference type="HAMAP-Rule" id="MF_00736"/>
    </source>
</evidence>
<evidence type="ECO:0000305" key="2"/>